<accession>Q54Y41</accession>
<organism>
    <name type="scientific">Dictyostelium discoideum</name>
    <name type="common">Social amoeba</name>
    <dbReference type="NCBI Taxonomy" id="44689"/>
    <lineage>
        <taxon>Eukaryota</taxon>
        <taxon>Amoebozoa</taxon>
        <taxon>Evosea</taxon>
        <taxon>Eumycetozoa</taxon>
        <taxon>Dictyostelia</taxon>
        <taxon>Dictyosteliales</taxon>
        <taxon>Dictyosteliaceae</taxon>
        <taxon>Dictyostelium</taxon>
    </lineage>
</organism>
<reference key="1">
    <citation type="journal article" date="2005" name="Nature">
        <title>The genome of the social amoeba Dictyostelium discoideum.</title>
        <authorList>
            <person name="Eichinger L."/>
            <person name="Pachebat J.A."/>
            <person name="Gloeckner G."/>
            <person name="Rajandream M.A."/>
            <person name="Sucgang R."/>
            <person name="Berriman M."/>
            <person name="Song J."/>
            <person name="Olsen R."/>
            <person name="Szafranski K."/>
            <person name="Xu Q."/>
            <person name="Tunggal B."/>
            <person name="Kummerfeld S."/>
            <person name="Madera M."/>
            <person name="Konfortov B.A."/>
            <person name="Rivero F."/>
            <person name="Bankier A.T."/>
            <person name="Lehmann R."/>
            <person name="Hamlin N."/>
            <person name="Davies R."/>
            <person name="Gaudet P."/>
            <person name="Fey P."/>
            <person name="Pilcher K."/>
            <person name="Chen G."/>
            <person name="Saunders D."/>
            <person name="Sodergren E.J."/>
            <person name="Davis P."/>
            <person name="Kerhornou A."/>
            <person name="Nie X."/>
            <person name="Hall N."/>
            <person name="Anjard C."/>
            <person name="Hemphill L."/>
            <person name="Bason N."/>
            <person name="Farbrother P."/>
            <person name="Desany B."/>
            <person name="Just E."/>
            <person name="Morio T."/>
            <person name="Rost R."/>
            <person name="Churcher C.M."/>
            <person name="Cooper J."/>
            <person name="Haydock S."/>
            <person name="van Driessche N."/>
            <person name="Cronin A."/>
            <person name="Goodhead I."/>
            <person name="Muzny D.M."/>
            <person name="Mourier T."/>
            <person name="Pain A."/>
            <person name="Lu M."/>
            <person name="Harper D."/>
            <person name="Lindsay R."/>
            <person name="Hauser H."/>
            <person name="James K.D."/>
            <person name="Quiles M."/>
            <person name="Madan Babu M."/>
            <person name="Saito T."/>
            <person name="Buchrieser C."/>
            <person name="Wardroper A."/>
            <person name="Felder M."/>
            <person name="Thangavelu M."/>
            <person name="Johnson D."/>
            <person name="Knights A."/>
            <person name="Loulseged H."/>
            <person name="Mungall K.L."/>
            <person name="Oliver K."/>
            <person name="Price C."/>
            <person name="Quail M.A."/>
            <person name="Urushihara H."/>
            <person name="Hernandez J."/>
            <person name="Rabbinowitsch E."/>
            <person name="Steffen D."/>
            <person name="Sanders M."/>
            <person name="Ma J."/>
            <person name="Kohara Y."/>
            <person name="Sharp S."/>
            <person name="Simmonds M.N."/>
            <person name="Spiegler S."/>
            <person name="Tivey A."/>
            <person name="Sugano S."/>
            <person name="White B."/>
            <person name="Walker D."/>
            <person name="Woodward J.R."/>
            <person name="Winckler T."/>
            <person name="Tanaka Y."/>
            <person name="Shaulsky G."/>
            <person name="Schleicher M."/>
            <person name="Weinstock G.M."/>
            <person name="Rosenthal A."/>
            <person name="Cox E.C."/>
            <person name="Chisholm R.L."/>
            <person name="Gibbs R.A."/>
            <person name="Loomis W.F."/>
            <person name="Platzer M."/>
            <person name="Kay R.R."/>
            <person name="Williams J.G."/>
            <person name="Dear P.H."/>
            <person name="Noegel A.A."/>
            <person name="Barrell B.G."/>
            <person name="Kuspa A."/>
        </authorList>
    </citation>
    <scope>NUCLEOTIDE SEQUENCE [LARGE SCALE GENOMIC DNA]</scope>
    <source>
        <strain>AX4</strain>
    </source>
</reference>
<sequence length="124" mass="13900">MSMNPIKKTEETVAAPAVNKISITLTSRNPKSLEKVCADIITLAKNKKVKAKGPIRIPNKVLKITTRKSPCGEGTNTWDRFEMRIHKRVIHILSTQDFVKEMNTISIEAGVDVEVIMDKKEAKN</sequence>
<protein>
    <recommendedName>
        <fullName evidence="1">Small ribosomal subunit protein uS10</fullName>
    </recommendedName>
    <alternativeName>
        <fullName>40S ribosomal protein S20</fullName>
    </alternativeName>
</protein>
<dbReference type="EMBL" id="AAFI02000023">
    <property type="protein sequence ID" value="EAL68387.1"/>
    <property type="molecule type" value="Genomic_DNA"/>
</dbReference>
<dbReference type="RefSeq" id="XP_642361.1">
    <property type="nucleotide sequence ID" value="XM_637269.1"/>
</dbReference>
<dbReference type="SMR" id="Q54Y41"/>
<dbReference type="FunCoup" id="Q54Y41">
    <property type="interactions" value="481"/>
</dbReference>
<dbReference type="STRING" id="44689.Q54Y41"/>
<dbReference type="PaxDb" id="44689-DDB0231060"/>
<dbReference type="EnsemblProtists" id="EAL68387">
    <property type="protein sequence ID" value="EAL68387"/>
    <property type="gene ID" value="DDB_G0278429"/>
</dbReference>
<dbReference type="GeneID" id="8621566"/>
<dbReference type="KEGG" id="ddi:DDB_G0278429"/>
<dbReference type="dictyBase" id="DDB_G0278429">
    <property type="gene designation" value="rps20"/>
</dbReference>
<dbReference type="VEuPathDB" id="AmoebaDB:DDB_G0278429"/>
<dbReference type="eggNOG" id="KOG0900">
    <property type="taxonomic scope" value="Eukaryota"/>
</dbReference>
<dbReference type="HOGENOM" id="CLU_122625_0_0_1"/>
<dbReference type="InParanoid" id="Q54Y41"/>
<dbReference type="OMA" id="IHKRVIH"/>
<dbReference type="PhylomeDB" id="Q54Y41"/>
<dbReference type="Reactome" id="R-DDI-156827">
    <property type="pathway name" value="L13a-mediated translational silencing of Ceruloplasmin expression"/>
</dbReference>
<dbReference type="Reactome" id="R-DDI-1799339">
    <property type="pathway name" value="SRP-dependent cotranslational protein targeting to membrane"/>
</dbReference>
<dbReference type="Reactome" id="R-DDI-72689">
    <property type="pathway name" value="Formation of a pool of free 40S subunits"/>
</dbReference>
<dbReference type="Reactome" id="R-DDI-72695">
    <property type="pathway name" value="Formation of the ternary complex, and subsequently, the 43S complex"/>
</dbReference>
<dbReference type="Reactome" id="R-DDI-72702">
    <property type="pathway name" value="Ribosomal scanning and start codon recognition"/>
</dbReference>
<dbReference type="Reactome" id="R-DDI-72706">
    <property type="pathway name" value="GTP hydrolysis and joining of the 60S ribosomal subunit"/>
</dbReference>
<dbReference type="Reactome" id="R-DDI-975956">
    <property type="pathway name" value="Nonsense Mediated Decay (NMD) independent of the Exon Junction Complex (EJC)"/>
</dbReference>
<dbReference type="Reactome" id="R-DDI-975957">
    <property type="pathway name" value="Nonsense Mediated Decay (NMD) enhanced by the Exon Junction Complex (EJC)"/>
</dbReference>
<dbReference type="PRO" id="PR:Q54Y41"/>
<dbReference type="Proteomes" id="UP000002195">
    <property type="component" value="Chromosome 3"/>
</dbReference>
<dbReference type="GO" id="GO:0022627">
    <property type="term" value="C:cytosolic small ribosomal subunit"/>
    <property type="evidence" value="ECO:0000318"/>
    <property type="project" value="GO_Central"/>
</dbReference>
<dbReference type="GO" id="GO:0031012">
    <property type="term" value="C:extracellular matrix"/>
    <property type="evidence" value="ECO:0007005"/>
    <property type="project" value="dictyBase"/>
</dbReference>
<dbReference type="GO" id="GO:0003723">
    <property type="term" value="F:RNA binding"/>
    <property type="evidence" value="ECO:0000250"/>
    <property type="project" value="dictyBase"/>
</dbReference>
<dbReference type="GO" id="GO:0003735">
    <property type="term" value="F:structural constituent of ribosome"/>
    <property type="evidence" value="ECO:0000250"/>
    <property type="project" value="dictyBase"/>
</dbReference>
<dbReference type="GO" id="GO:0006412">
    <property type="term" value="P:translation"/>
    <property type="evidence" value="ECO:0007669"/>
    <property type="project" value="InterPro"/>
</dbReference>
<dbReference type="FunFam" id="3.30.70.600:FF:000004">
    <property type="entry name" value="30S ribosomal protein S10"/>
    <property type="match status" value="1"/>
</dbReference>
<dbReference type="Gene3D" id="3.30.70.600">
    <property type="entry name" value="Ribosomal protein S10 domain"/>
    <property type="match status" value="1"/>
</dbReference>
<dbReference type="HAMAP" id="MF_00508">
    <property type="entry name" value="Ribosomal_uS10"/>
    <property type="match status" value="1"/>
</dbReference>
<dbReference type="InterPro" id="IPR001848">
    <property type="entry name" value="Ribosomal_uS10"/>
</dbReference>
<dbReference type="InterPro" id="IPR027486">
    <property type="entry name" value="Ribosomal_uS10_dom"/>
</dbReference>
<dbReference type="InterPro" id="IPR036838">
    <property type="entry name" value="Ribosomal_uS10_dom_sf"/>
</dbReference>
<dbReference type="InterPro" id="IPR005729">
    <property type="entry name" value="Ribosomal_uS10_euk/arc"/>
</dbReference>
<dbReference type="NCBIfam" id="TIGR01046">
    <property type="entry name" value="uS10_euk_arch"/>
    <property type="match status" value="1"/>
</dbReference>
<dbReference type="PANTHER" id="PTHR11700">
    <property type="entry name" value="30S RIBOSOMAL PROTEIN S10 FAMILY MEMBER"/>
    <property type="match status" value="1"/>
</dbReference>
<dbReference type="Pfam" id="PF00338">
    <property type="entry name" value="Ribosomal_S10"/>
    <property type="match status" value="1"/>
</dbReference>
<dbReference type="PRINTS" id="PR00971">
    <property type="entry name" value="RIBOSOMALS10"/>
</dbReference>
<dbReference type="SMART" id="SM01403">
    <property type="entry name" value="Ribosomal_S10"/>
    <property type="match status" value="1"/>
</dbReference>
<dbReference type="SUPFAM" id="SSF54999">
    <property type="entry name" value="Ribosomal protein S10"/>
    <property type="match status" value="1"/>
</dbReference>
<proteinExistence type="inferred from homology"/>
<comment type="similarity">
    <text evidence="1">Belongs to the universal ribosomal protein uS10 family.</text>
</comment>
<feature type="chain" id="PRO_0000323434" description="Small ribosomal subunit protein uS10">
    <location>
        <begin position="1"/>
        <end position="124"/>
    </location>
</feature>
<keyword id="KW-1185">Reference proteome</keyword>
<keyword id="KW-0687">Ribonucleoprotein</keyword>
<keyword id="KW-0689">Ribosomal protein</keyword>
<gene>
    <name type="primary">rps20</name>
    <name type="ORF">DDB_G0278429</name>
</gene>
<name>RS20_DICDI</name>
<evidence type="ECO:0000305" key="1"/>